<accession>Q9STF3</accession>
<reference key="1">
    <citation type="journal article" date="2000" name="Nature">
        <title>Sequence and analysis of chromosome 3 of the plant Arabidopsis thaliana.</title>
        <authorList>
            <person name="Salanoubat M."/>
            <person name="Lemcke K."/>
            <person name="Rieger M."/>
            <person name="Ansorge W."/>
            <person name="Unseld M."/>
            <person name="Fartmann B."/>
            <person name="Valle G."/>
            <person name="Bloecker H."/>
            <person name="Perez-Alonso M."/>
            <person name="Obermaier B."/>
            <person name="Delseny M."/>
            <person name="Boutry M."/>
            <person name="Grivell L.A."/>
            <person name="Mache R."/>
            <person name="Puigdomenech P."/>
            <person name="De Simone V."/>
            <person name="Choisne N."/>
            <person name="Artiguenave F."/>
            <person name="Robert C."/>
            <person name="Brottier P."/>
            <person name="Wincker P."/>
            <person name="Cattolico L."/>
            <person name="Weissenbach J."/>
            <person name="Saurin W."/>
            <person name="Quetier F."/>
            <person name="Schaefer M."/>
            <person name="Mueller-Auer S."/>
            <person name="Gabel C."/>
            <person name="Fuchs M."/>
            <person name="Benes V."/>
            <person name="Wurmbach E."/>
            <person name="Drzonek H."/>
            <person name="Erfle H."/>
            <person name="Jordan N."/>
            <person name="Bangert S."/>
            <person name="Wiedelmann R."/>
            <person name="Kranz H."/>
            <person name="Voss H."/>
            <person name="Holland R."/>
            <person name="Brandt P."/>
            <person name="Nyakatura G."/>
            <person name="Vezzi A."/>
            <person name="D'Angelo M."/>
            <person name="Pallavicini A."/>
            <person name="Toppo S."/>
            <person name="Simionati B."/>
            <person name="Conrad A."/>
            <person name="Hornischer K."/>
            <person name="Kauer G."/>
            <person name="Loehnert T.-H."/>
            <person name="Nordsiek G."/>
            <person name="Reichelt J."/>
            <person name="Scharfe M."/>
            <person name="Schoen O."/>
            <person name="Bargues M."/>
            <person name="Terol J."/>
            <person name="Climent J."/>
            <person name="Navarro P."/>
            <person name="Collado C."/>
            <person name="Perez-Perez A."/>
            <person name="Ottenwaelder B."/>
            <person name="Duchemin D."/>
            <person name="Cooke R."/>
            <person name="Laudie M."/>
            <person name="Berger-Llauro C."/>
            <person name="Purnelle B."/>
            <person name="Masuy D."/>
            <person name="de Haan M."/>
            <person name="Maarse A.C."/>
            <person name="Alcaraz J.-P."/>
            <person name="Cottet A."/>
            <person name="Casacuberta E."/>
            <person name="Monfort A."/>
            <person name="Argiriou A."/>
            <person name="Flores M."/>
            <person name="Liguori R."/>
            <person name="Vitale D."/>
            <person name="Mannhaupt G."/>
            <person name="Haase D."/>
            <person name="Schoof H."/>
            <person name="Rudd S."/>
            <person name="Zaccaria P."/>
            <person name="Mewes H.-W."/>
            <person name="Mayer K.F.X."/>
            <person name="Kaul S."/>
            <person name="Town C.D."/>
            <person name="Koo H.L."/>
            <person name="Tallon L.J."/>
            <person name="Jenkins J."/>
            <person name="Rooney T."/>
            <person name="Rizzo M."/>
            <person name="Walts A."/>
            <person name="Utterback T."/>
            <person name="Fujii C.Y."/>
            <person name="Shea T.P."/>
            <person name="Creasy T.H."/>
            <person name="Haas B."/>
            <person name="Maiti R."/>
            <person name="Wu D."/>
            <person name="Peterson J."/>
            <person name="Van Aken S."/>
            <person name="Pai G."/>
            <person name="Militscher J."/>
            <person name="Sellers P."/>
            <person name="Gill J.E."/>
            <person name="Feldblyum T.V."/>
            <person name="Preuss D."/>
            <person name="Lin X."/>
            <person name="Nierman W.C."/>
            <person name="Salzberg S.L."/>
            <person name="White O."/>
            <person name="Venter J.C."/>
            <person name="Fraser C.M."/>
            <person name="Kaneko T."/>
            <person name="Nakamura Y."/>
            <person name="Sato S."/>
            <person name="Kato T."/>
            <person name="Asamizu E."/>
            <person name="Sasamoto S."/>
            <person name="Kimura T."/>
            <person name="Idesawa K."/>
            <person name="Kawashima K."/>
            <person name="Kishida Y."/>
            <person name="Kiyokawa C."/>
            <person name="Kohara M."/>
            <person name="Matsumoto M."/>
            <person name="Matsuno A."/>
            <person name="Muraki A."/>
            <person name="Nakayama S."/>
            <person name="Nakazaki N."/>
            <person name="Shinpo S."/>
            <person name="Takeuchi C."/>
            <person name="Wada T."/>
            <person name="Watanabe A."/>
            <person name="Yamada M."/>
            <person name="Yasuda M."/>
            <person name="Tabata S."/>
        </authorList>
    </citation>
    <scope>NUCLEOTIDE SEQUENCE [LARGE SCALE GENOMIC DNA]</scope>
    <source>
        <strain>cv. Columbia</strain>
    </source>
</reference>
<reference key="2">
    <citation type="journal article" date="2017" name="Plant J.">
        <title>Araport11: a complete reannotation of the Arabidopsis thaliana reference genome.</title>
        <authorList>
            <person name="Cheng C.Y."/>
            <person name="Krishnakumar V."/>
            <person name="Chan A.P."/>
            <person name="Thibaud-Nissen F."/>
            <person name="Schobel S."/>
            <person name="Town C.D."/>
        </authorList>
    </citation>
    <scope>GENOME REANNOTATION</scope>
    <source>
        <strain>cv. Columbia</strain>
    </source>
</reference>
<reference key="3">
    <citation type="submission" date="2006-07" db="EMBL/GenBank/DDBJ databases">
        <title>Large-scale analysis of RIKEN Arabidopsis full-length (RAFL) cDNAs.</title>
        <authorList>
            <person name="Totoki Y."/>
            <person name="Seki M."/>
            <person name="Ishida J."/>
            <person name="Nakajima M."/>
            <person name="Enju A."/>
            <person name="Kamiya A."/>
            <person name="Narusaka M."/>
            <person name="Shin-i T."/>
            <person name="Nakagawa M."/>
            <person name="Sakamoto N."/>
            <person name="Oishi K."/>
            <person name="Kohara Y."/>
            <person name="Kobayashi M."/>
            <person name="Toyoda A."/>
            <person name="Sakaki Y."/>
            <person name="Sakurai T."/>
            <person name="Iida K."/>
            <person name="Akiyama K."/>
            <person name="Satou M."/>
            <person name="Toyoda T."/>
            <person name="Konagaya A."/>
            <person name="Carninci P."/>
            <person name="Kawai J."/>
            <person name="Hayashizaki Y."/>
            <person name="Shinozaki K."/>
        </authorList>
    </citation>
    <scope>NUCLEOTIDE SEQUENCE [LARGE SCALE MRNA]</scope>
    <source>
        <strain>cv. Columbia</strain>
    </source>
</reference>
<reference key="4">
    <citation type="journal article" date="2000" name="Plant Mol. Biol.">
        <title>In Arabidopsis thaliana, 1% of the genome codes for a novel protein family unique to plants.</title>
        <authorList>
            <person name="Aubourg S."/>
            <person name="Boudet N."/>
            <person name="Kreis M."/>
            <person name="Lecharny A."/>
        </authorList>
    </citation>
    <scope>GENE FAMILY</scope>
</reference>
<reference key="5">
    <citation type="journal article" date="2003" name="Plant J.">
        <title>A nucleus-encoded factor, CRR2, is essential for the expression of chloroplast ndhB in Arabidopsis.</title>
        <authorList>
            <person name="Hashimoto M."/>
            <person name="Endo T."/>
            <person name="Peltier G."/>
            <person name="Tasaka M."/>
            <person name="Shikanai T."/>
        </authorList>
    </citation>
    <scope>FUNCTION</scope>
</reference>
<reference key="6">
    <citation type="journal article" date="2004" name="Plant Cell">
        <title>Genome-wide analysis of Arabidopsis pentatricopeptide repeat proteins reveals their essential role in organelle biogenesis.</title>
        <authorList>
            <person name="Lurin C."/>
            <person name="Andres C."/>
            <person name="Aubourg S."/>
            <person name="Bellaoui M."/>
            <person name="Bitton F."/>
            <person name="Bruyere C."/>
            <person name="Caboche M."/>
            <person name="Debast C."/>
            <person name="Gualberto J."/>
            <person name="Hoffmann B."/>
            <person name="Lecharny A."/>
            <person name="Le Ret M."/>
            <person name="Martin-Magniette M.-L."/>
            <person name="Mireau H."/>
            <person name="Peeters N."/>
            <person name="Renou J.-P."/>
            <person name="Szurek B."/>
            <person name="Taconnat L."/>
            <person name="Small I."/>
        </authorList>
    </citation>
    <scope>GENE FAMILY</scope>
</reference>
<reference key="7">
    <citation type="journal article" date="2020" name="Plant Physiol.">
        <title>Collaboration between NDH and KEA3 allows maximally efficient photosynthesis after a long dark adaptation.</title>
        <authorList>
            <person name="Basso L."/>
            <person name="Yamori W."/>
            <person name="Szabo I."/>
            <person name="Shikanai T."/>
        </authorList>
    </citation>
    <scope>FUNCTION</scope>
    <scope>DISRUPTION PHENOTYPE</scope>
    <source>
        <strain>cv. Columbia GL1</strain>
    </source>
</reference>
<proteinExistence type="evidence at transcript level"/>
<keyword id="KW-0150">Chloroplast</keyword>
<keyword id="KW-0934">Plastid</keyword>
<keyword id="KW-1185">Reference proteome</keyword>
<keyword id="KW-0677">Repeat</keyword>
<keyword id="KW-0809">Transit peptide</keyword>
<organism>
    <name type="scientific">Arabidopsis thaliana</name>
    <name type="common">Mouse-ear cress</name>
    <dbReference type="NCBI Taxonomy" id="3702"/>
    <lineage>
        <taxon>Eukaryota</taxon>
        <taxon>Viridiplantae</taxon>
        <taxon>Streptophyta</taxon>
        <taxon>Embryophyta</taxon>
        <taxon>Tracheophyta</taxon>
        <taxon>Spermatophyta</taxon>
        <taxon>Magnoliopsida</taxon>
        <taxon>eudicotyledons</taxon>
        <taxon>Gunneridae</taxon>
        <taxon>Pentapetalae</taxon>
        <taxon>rosids</taxon>
        <taxon>malvids</taxon>
        <taxon>Brassicales</taxon>
        <taxon>Brassicaceae</taxon>
        <taxon>Camelineae</taxon>
        <taxon>Arabidopsis</taxon>
    </lineage>
</organism>
<dbReference type="EMBL" id="AL096859">
    <property type="protein sequence ID" value="CAB51186.1"/>
    <property type="molecule type" value="Genomic_DNA"/>
</dbReference>
<dbReference type="EMBL" id="CP002686">
    <property type="protein sequence ID" value="AEE78205.1"/>
    <property type="molecule type" value="Genomic_DNA"/>
</dbReference>
<dbReference type="EMBL" id="AK226825">
    <property type="protein sequence ID" value="BAE98921.1"/>
    <property type="molecule type" value="mRNA"/>
</dbReference>
<dbReference type="PIR" id="T12969">
    <property type="entry name" value="T12969"/>
</dbReference>
<dbReference type="RefSeq" id="NP_190263.1">
    <property type="nucleotide sequence ID" value="NM_114546.4"/>
</dbReference>
<dbReference type="SMR" id="Q9STF3"/>
<dbReference type="BioGRID" id="9152">
    <property type="interactions" value="1"/>
</dbReference>
<dbReference type="FunCoup" id="Q9STF3">
    <property type="interactions" value="164"/>
</dbReference>
<dbReference type="STRING" id="3702.Q9STF3"/>
<dbReference type="GlyGen" id="Q9STF3">
    <property type="glycosylation" value="1 site"/>
</dbReference>
<dbReference type="PaxDb" id="3702-AT3G46790.1"/>
<dbReference type="ProteomicsDB" id="249107"/>
<dbReference type="EnsemblPlants" id="AT3G46790.1">
    <property type="protein sequence ID" value="AT3G46790.1"/>
    <property type="gene ID" value="AT3G46790"/>
</dbReference>
<dbReference type="GeneID" id="823832"/>
<dbReference type="Gramene" id="AT3G46790.1">
    <property type="protein sequence ID" value="AT3G46790.1"/>
    <property type="gene ID" value="AT3G46790"/>
</dbReference>
<dbReference type="KEGG" id="ath:AT3G46790"/>
<dbReference type="Araport" id="AT3G46790"/>
<dbReference type="TAIR" id="AT3G46790">
    <property type="gene designation" value="CRR2"/>
</dbReference>
<dbReference type="eggNOG" id="KOG4197">
    <property type="taxonomic scope" value="Eukaryota"/>
</dbReference>
<dbReference type="HOGENOM" id="CLU_002706_37_2_1"/>
<dbReference type="InParanoid" id="Q9STF3"/>
<dbReference type="OMA" id="YAEAQMW"/>
<dbReference type="PhylomeDB" id="Q9STF3"/>
<dbReference type="PRO" id="PR:Q9STF3"/>
<dbReference type="Proteomes" id="UP000006548">
    <property type="component" value="Chromosome 3"/>
</dbReference>
<dbReference type="ExpressionAtlas" id="Q9STF3">
    <property type="expression patterns" value="baseline and differential"/>
</dbReference>
<dbReference type="GO" id="GO:0009507">
    <property type="term" value="C:chloroplast"/>
    <property type="evidence" value="ECO:0000250"/>
    <property type="project" value="TAIR"/>
</dbReference>
<dbReference type="GO" id="GO:0003723">
    <property type="term" value="F:RNA binding"/>
    <property type="evidence" value="ECO:0007669"/>
    <property type="project" value="InterPro"/>
</dbReference>
<dbReference type="GO" id="GO:0008270">
    <property type="term" value="F:zinc ion binding"/>
    <property type="evidence" value="ECO:0007669"/>
    <property type="project" value="InterPro"/>
</dbReference>
<dbReference type="GO" id="GO:0031425">
    <property type="term" value="P:chloroplast RNA processing"/>
    <property type="evidence" value="ECO:0000315"/>
    <property type="project" value="TAIR"/>
</dbReference>
<dbReference type="GO" id="GO:0031426">
    <property type="term" value="P:polycistronic mRNA processing"/>
    <property type="evidence" value="ECO:0000315"/>
    <property type="project" value="TAIR"/>
</dbReference>
<dbReference type="GO" id="GO:0009451">
    <property type="term" value="P:RNA modification"/>
    <property type="evidence" value="ECO:0007669"/>
    <property type="project" value="InterPro"/>
</dbReference>
<dbReference type="FunFam" id="1.25.40.10:FF:000341">
    <property type="entry name" value="Pentatricopeptide repeat-containing protein chloroplastic"/>
    <property type="match status" value="1"/>
</dbReference>
<dbReference type="FunFam" id="1.25.40.10:FF:000462">
    <property type="entry name" value="Pentatricopeptide repeat-containing protein, chloroplastic"/>
    <property type="match status" value="1"/>
</dbReference>
<dbReference type="FunFam" id="1.25.40.10:FF:001104">
    <property type="entry name" value="Uncharacterized protein"/>
    <property type="match status" value="1"/>
</dbReference>
<dbReference type="Gene3D" id="1.25.40.10">
    <property type="entry name" value="Tetratricopeptide repeat domain"/>
    <property type="match status" value="4"/>
</dbReference>
<dbReference type="InterPro" id="IPR032867">
    <property type="entry name" value="DYW_dom"/>
</dbReference>
<dbReference type="InterPro" id="IPR046848">
    <property type="entry name" value="E_motif"/>
</dbReference>
<dbReference type="InterPro" id="IPR002885">
    <property type="entry name" value="Pentatricopeptide_rpt"/>
</dbReference>
<dbReference type="InterPro" id="IPR046960">
    <property type="entry name" value="PPR_At4g14850-like_plant"/>
</dbReference>
<dbReference type="InterPro" id="IPR011990">
    <property type="entry name" value="TPR-like_helical_dom_sf"/>
</dbReference>
<dbReference type="NCBIfam" id="TIGR00756">
    <property type="entry name" value="PPR"/>
    <property type="match status" value="4"/>
</dbReference>
<dbReference type="PANTHER" id="PTHR47926">
    <property type="entry name" value="PENTATRICOPEPTIDE REPEAT-CONTAINING PROTEIN"/>
    <property type="match status" value="1"/>
</dbReference>
<dbReference type="Pfam" id="PF14432">
    <property type="entry name" value="DYW_deaminase"/>
    <property type="match status" value="1"/>
</dbReference>
<dbReference type="Pfam" id="PF20431">
    <property type="entry name" value="E_motif"/>
    <property type="match status" value="1"/>
</dbReference>
<dbReference type="Pfam" id="PF01535">
    <property type="entry name" value="PPR"/>
    <property type="match status" value="3"/>
</dbReference>
<dbReference type="Pfam" id="PF13041">
    <property type="entry name" value="PPR_2"/>
    <property type="match status" value="2"/>
</dbReference>
<dbReference type="PROSITE" id="PS51375">
    <property type="entry name" value="PPR"/>
    <property type="match status" value="13"/>
</dbReference>
<gene>
    <name evidence="5" type="primary">CRR2</name>
    <name evidence="4" type="synonym">PCMP-H54</name>
    <name evidence="7" type="ordered locus">At3g46790</name>
    <name evidence="8" type="ORF">T6H20.180</name>
</gene>
<evidence type="ECO:0000255" key="1"/>
<evidence type="ECO:0000269" key="2">
    <source>
    </source>
</evidence>
<evidence type="ECO:0000269" key="3">
    <source>
    </source>
</evidence>
<evidence type="ECO:0000303" key="4">
    <source>
    </source>
</evidence>
<evidence type="ECO:0000303" key="5">
    <source>
    </source>
</evidence>
<evidence type="ECO:0000305" key="6"/>
<evidence type="ECO:0000312" key="7">
    <source>
        <dbReference type="Araport" id="AT3G46790"/>
    </source>
</evidence>
<evidence type="ECO:0000312" key="8">
    <source>
        <dbReference type="EMBL" id="CAB51186.1"/>
    </source>
</evidence>
<comment type="function">
    <text evidence="2 3">Required for the intergenic processing between chloroplast rsp7 and ndhB transcripts (PubMed:14617084). Necessary for chloroplast NADH dehydrogenase-like (NDH) complex-dependent cyclic electron transport around PSI (CET) (PubMed:32978277).</text>
</comment>
<comment type="subcellular location">
    <subcellularLocation>
        <location evidence="6">Plastid</location>
        <location evidence="6">Chloroplast</location>
    </subcellularLocation>
</comment>
<comment type="disruption phenotype">
    <text evidence="3">Abolished chloroplast NADH dehydrogenase-like (NDH) complex-dependent cyclic electron transport (CET) around photosystem I (PSI) (PubMed:32978277). The double mutant crr2 kea3 enhances the kea3 single mutant phenotypes, and delays induction of CO(2) fixation after overnight dark adaptation (PubMed:32978277).</text>
</comment>
<comment type="similarity">
    <text evidence="6">Belongs to the PPR family. PCMP-H subfamily.</text>
</comment>
<comment type="online information" name="Pentatricopeptide repeat proteins">
    <link uri="https://ppr.plantenergy.uwa.edu.au"/>
</comment>
<feature type="transit peptide" description="Chloroplast" evidence="1">
    <location>
        <begin position="1"/>
        <end position="51"/>
    </location>
</feature>
<feature type="chain" id="PRO_0000356124" description="Pentatricopeptide repeat-containing protein CRR2, chloroplastic">
    <location>
        <begin position="52"/>
        <end position="657"/>
    </location>
</feature>
<feature type="repeat" description="PPR 1">
    <location>
        <begin position="45"/>
        <end position="75"/>
    </location>
</feature>
<feature type="repeat" description="PPR 2">
    <location>
        <begin position="76"/>
        <end position="110"/>
    </location>
</feature>
<feature type="repeat" description="PPR 3">
    <location>
        <begin position="111"/>
        <end position="141"/>
    </location>
</feature>
<feature type="repeat" description="PPR 4">
    <location>
        <begin position="142"/>
        <end position="176"/>
    </location>
</feature>
<feature type="repeat" description="PPR 5">
    <location>
        <begin position="177"/>
        <end position="215"/>
    </location>
</feature>
<feature type="repeat" description="PPR 6">
    <location>
        <begin position="216"/>
        <end position="246"/>
    </location>
</feature>
<feature type="repeat" description="PPR 7">
    <location>
        <begin position="247"/>
        <end position="277"/>
    </location>
</feature>
<feature type="repeat" description="PPR 8">
    <location>
        <begin position="284"/>
        <end position="318"/>
    </location>
</feature>
<feature type="repeat" description="PPR 9">
    <location>
        <begin position="319"/>
        <end position="349"/>
    </location>
</feature>
<feature type="repeat" description="PPR 10">
    <location>
        <begin position="350"/>
        <end position="384"/>
    </location>
</feature>
<feature type="repeat" description="PPR 11">
    <location>
        <begin position="385"/>
        <end position="420"/>
    </location>
</feature>
<feature type="repeat" description="PPR 12">
    <location>
        <begin position="421"/>
        <end position="451"/>
    </location>
</feature>
<feature type="region of interest" description="Type E motif">
    <location>
        <begin position="456"/>
        <end position="531"/>
    </location>
</feature>
<feature type="region of interest" description="Type E(+) motif">
    <location>
        <begin position="532"/>
        <end position="562"/>
    </location>
</feature>
<feature type="region of interest" description="Type DYW motif">
    <location>
        <begin position="563"/>
        <end position="657"/>
    </location>
</feature>
<sequence>MFLSHPPQVIQPTYHTVNFLPRSPLKPPSCSVALNNPSISSGAGAKISNNQLIQSLCKEGKLKQAIRVLSQESSPSQQTYELLILCCGHRSSLSDALRVHRHILDNGSDQDPFLATKLIGMYSDLGSVDYARKVFDKTRKRTIYVWNALFRALTLAGHGEEVLGLYWKMNRIGVESDRFTYTYVLKACVASECTVNHLMKGKEIHAHLTRRGYSSHVYIMTTLVDMYARFGCVDYASYVFGGMPVRNVVSWSAMIACYAKNGKAFEALRTFREMMRETKDSSPNSVTMVSVLQACASLAALEQGKLIHGYILRRGLDSILPVISALVTMYGRCGKLEVGQRVFDRMHDRDVVSWNSLISSYGVHGYGKKAIQIFEEMLANGASPTPVTFVSVLGACSHEGLVEEGKRLFETMWRDHGIKPQIEHYACMVDLLGRANRLDEAAKMVQDMRTEPGPKVWGSLLGSCRIHGNVELAERASRRLFALEPKNAGNYVLLADIYAEAQMWDEVKRVKKLLEHRGLQKLPGRCWMEVRRKMYSFVSVDEFNPLMEQIHAFLVKLAEDMKEKGYIPQTKGVLYELETEEKERIVLGHSEKLALAFGLINTSKGEPIRITKNLRLCEDCHLFTKFISKFMEKEILVRDVNRFHRFKNGVCSCGDYW</sequence>
<protein>
    <recommendedName>
        <fullName evidence="6">Pentatricopeptide repeat-containing protein CRR2, chloroplastic</fullName>
    </recommendedName>
    <alternativeName>
        <fullName evidence="4">Plant combinatorial and modular protein H54</fullName>
        <shortName evidence="4">AtPCMP-H54</shortName>
    </alternativeName>
    <alternativeName>
        <fullName evidence="5">Protein CHLORORESPIRATORY REDUCTION 2</fullName>
    </alternativeName>
</protein>
<name>PP265_ARATH</name>